<dbReference type="EC" id="2.1.3.2" evidence="1"/>
<dbReference type="EMBL" id="AE004969">
    <property type="protein sequence ID" value="AAW90497.1"/>
    <property type="molecule type" value="Genomic_DNA"/>
</dbReference>
<dbReference type="RefSeq" id="WP_003705350.1">
    <property type="nucleotide sequence ID" value="NC_002946.2"/>
</dbReference>
<dbReference type="RefSeq" id="YP_208909.1">
    <property type="nucleotide sequence ID" value="NC_002946.2"/>
</dbReference>
<dbReference type="SMR" id="Q5F5P0"/>
<dbReference type="STRING" id="242231.NGO_1877"/>
<dbReference type="KEGG" id="ngo:NGO_1877"/>
<dbReference type="PATRIC" id="fig|242231.10.peg.2256"/>
<dbReference type="HOGENOM" id="CLU_043846_1_2_4"/>
<dbReference type="UniPathway" id="UPA00070">
    <property type="reaction ID" value="UER00116"/>
</dbReference>
<dbReference type="Proteomes" id="UP000000535">
    <property type="component" value="Chromosome"/>
</dbReference>
<dbReference type="GO" id="GO:0005829">
    <property type="term" value="C:cytosol"/>
    <property type="evidence" value="ECO:0007669"/>
    <property type="project" value="TreeGrafter"/>
</dbReference>
<dbReference type="GO" id="GO:0016597">
    <property type="term" value="F:amino acid binding"/>
    <property type="evidence" value="ECO:0007669"/>
    <property type="project" value="InterPro"/>
</dbReference>
<dbReference type="GO" id="GO:0004070">
    <property type="term" value="F:aspartate carbamoyltransferase activity"/>
    <property type="evidence" value="ECO:0007669"/>
    <property type="project" value="UniProtKB-UniRule"/>
</dbReference>
<dbReference type="GO" id="GO:0006207">
    <property type="term" value="P:'de novo' pyrimidine nucleobase biosynthetic process"/>
    <property type="evidence" value="ECO:0007669"/>
    <property type="project" value="InterPro"/>
</dbReference>
<dbReference type="GO" id="GO:0044205">
    <property type="term" value="P:'de novo' UMP biosynthetic process"/>
    <property type="evidence" value="ECO:0007669"/>
    <property type="project" value="UniProtKB-UniRule"/>
</dbReference>
<dbReference type="GO" id="GO:0006520">
    <property type="term" value="P:amino acid metabolic process"/>
    <property type="evidence" value="ECO:0007669"/>
    <property type="project" value="InterPro"/>
</dbReference>
<dbReference type="FunFam" id="3.40.50.1370:FF:000001">
    <property type="entry name" value="Aspartate carbamoyltransferase"/>
    <property type="match status" value="1"/>
</dbReference>
<dbReference type="FunFam" id="3.40.50.1370:FF:000002">
    <property type="entry name" value="Aspartate carbamoyltransferase 2"/>
    <property type="match status" value="1"/>
</dbReference>
<dbReference type="Gene3D" id="3.40.50.1370">
    <property type="entry name" value="Aspartate/ornithine carbamoyltransferase"/>
    <property type="match status" value="2"/>
</dbReference>
<dbReference type="HAMAP" id="MF_00001">
    <property type="entry name" value="Asp_carb_tr"/>
    <property type="match status" value="1"/>
</dbReference>
<dbReference type="InterPro" id="IPR006132">
    <property type="entry name" value="Asp/Orn_carbamoyltranf_P-bd"/>
</dbReference>
<dbReference type="InterPro" id="IPR006130">
    <property type="entry name" value="Asp/Orn_carbamoylTrfase"/>
</dbReference>
<dbReference type="InterPro" id="IPR036901">
    <property type="entry name" value="Asp/Orn_carbamoylTrfase_sf"/>
</dbReference>
<dbReference type="InterPro" id="IPR002082">
    <property type="entry name" value="Asp_carbamoyltransf"/>
</dbReference>
<dbReference type="InterPro" id="IPR006131">
    <property type="entry name" value="Asp_carbamoyltransf_Asp/Orn-bd"/>
</dbReference>
<dbReference type="NCBIfam" id="TIGR00670">
    <property type="entry name" value="asp_carb_tr"/>
    <property type="match status" value="1"/>
</dbReference>
<dbReference type="NCBIfam" id="NF002032">
    <property type="entry name" value="PRK00856.1"/>
    <property type="match status" value="1"/>
</dbReference>
<dbReference type="PANTHER" id="PTHR45753:SF6">
    <property type="entry name" value="ASPARTATE CARBAMOYLTRANSFERASE"/>
    <property type="match status" value="1"/>
</dbReference>
<dbReference type="PANTHER" id="PTHR45753">
    <property type="entry name" value="ORNITHINE CARBAMOYLTRANSFERASE, MITOCHONDRIAL"/>
    <property type="match status" value="1"/>
</dbReference>
<dbReference type="Pfam" id="PF00185">
    <property type="entry name" value="OTCace"/>
    <property type="match status" value="1"/>
</dbReference>
<dbReference type="Pfam" id="PF02729">
    <property type="entry name" value="OTCace_N"/>
    <property type="match status" value="1"/>
</dbReference>
<dbReference type="PRINTS" id="PR00100">
    <property type="entry name" value="AOTCASE"/>
</dbReference>
<dbReference type="PRINTS" id="PR00101">
    <property type="entry name" value="ATCASE"/>
</dbReference>
<dbReference type="SUPFAM" id="SSF53671">
    <property type="entry name" value="Aspartate/ornithine carbamoyltransferase"/>
    <property type="match status" value="1"/>
</dbReference>
<dbReference type="PROSITE" id="PS00097">
    <property type="entry name" value="CARBAMOYLTRANSFERASE"/>
    <property type="match status" value="1"/>
</dbReference>
<sequence length="306" mass="34196">MPNPLYRQHIISISDLSREQLEYLLQTALKLKAHPRGDLLEGKLIGSCFFEPSTRTRLSFETAVQRLGGKVIGFSDGANTSAKKGETLADTARIISGYTDAIVQRHPKDGAARVAAEFSRVPVINAGDGTNQHPSQTLLDLVTIYETQGRLDKLKIAMAGDLKYGRTVHSLCQALKRWGCEFAFVSPPSLAMPDYITEELEEADCRYRALGSLEEAAEWADILYMTRVQRERFDEQEFAKIQGKFNLEASMLARAKPNLRVLHPLPRTDEIHPDVDAAPHAYYFEQATNGVYARMAILSLVLNEEV</sequence>
<name>PYRB_NEIG1</name>
<protein>
    <recommendedName>
        <fullName evidence="1">Aspartate carbamoyltransferase catalytic subunit</fullName>
        <ecNumber evidence="1">2.1.3.2</ecNumber>
    </recommendedName>
    <alternativeName>
        <fullName evidence="1">Aspartate transcarbamylase</fullName>
        <shortName evidence="1">ATCase</shortName>
    </alternativeName>
</protein>
<accession>Q5F5P0</accession>
<feature type="chain" id="PRO_0000301596" description="Aspartate carbamoyltransferase catalytic subunit">
    <location>
        <begin position="1"/>
        <end position="306"/>
    </location>
</feature>
<feature type="binding site" evidence="1">
    <location>
        <position position="55"/>
    </location>
    <ligand>
        <name>carbamoyl phosphate</name>
        <dbReference type="ChEBI" id="CHEBI:58228"/>
    </ligand>
</feature>
<feature type="binding site" evidence="1">
    <location>
        <position position="56"/>
    </location>
    <ligand>
        <name>carbamoyl phosphate</name>
        <dbReference type="ChEBI" id="CHEBI:58228"/>
    </ligand>
</feature>
<feature type="binding site" evidence="1">
    <location>
        <position position="84"/>
    </location>
    <ligand>
        <name>L-aspartate</name>
        <dbReference type="ChEBI" id="CHEBI:29991"/>
    </ligand>
</feature>
<feature type="binding site" evidence="1">
    <location>
        <position position="105"/>
    </location>
    <ligand>
        <name>carbamoyl phosphate</name>
        <dbReference type="ChEBI" id="CHEBI:58228"/>
    </ligand>
</feature>
<feature type="binding site" evidence="1">
    <location>
        <position position="133"/>
    </location>
    <ligand>
        <name>carbamoyl phosphate</name>
        <dbReference type="ChEBI" id="CHEBI:58228"/>
    </ligand>
</feature>
<feature type="binding site" evidence="1">
    <location>
        <position position="136"/>
    </location>
    <ligand>
        <name>carbamoyl phosphate</name>
        <dbReference type="ChEBI" id="CHEBI:58228"/>
    </ligand>
</feature>
<feature type="binding site" evidence="1">
    <location>
        <position position="166"/>
    </location>
    <ligand>
        <name>L-aspartate</name>
        <dbReference type="ChEBI" id="CHEBI:29991"/>
    </ligand>
</feature>
<feature type="binding site" evidence="1">
    <location>
        <position position="227"/>
    </location>
    <ligand>
        <name>L-aspartate</name>
        <dbReference type="ChEBI" id="CHEBI:29991"/>
    </ligand>
</feature>
<feature type="binding site" evidence="1">
    <location>
        <position position="265"/>
    </location>
    <ligand>
        <name>carbamoyl phosphate</name>
        <dbReference type="ChEBI" id="CHEBI:58228"/>
    </ligand>
</feature>
<feature type="binding site" evidence="1">
    <location>
        <position position="266"/>
    </location>
    <ligand>
        <name>carbamoyl phosphate</name>
        <dbReference type="ChEBI" id="CHEBI:58228"/>
    </ligand>
</feature>
<comment type="function">
    <text evidence="1">Catalyzes the condensation of carbamoyl phosphate and aspartate to form carbamoyl aspartate and inorganic phosphate, the committed step in the de novo pyrimidine nucleotide biosynthesis pathway.</text>
</comment>
<comment type="catalytic activity">
    <reaction evidence="1">
        <text>carbamoyl phosphate + L-aspartate = N-carbamoyl-L-aspartate + phosphate + H(+)</text>
        <dbReference type="Rhea" id="RHEA:20013"/>
        <dbReference type="ChEBI" id="CHEBI:15378"/>
        <dbReference type="ChEBI" id="CHEBI:29991"/>
        <dbReference type="ChEBI" id="CHEBI:32814"/>
        <dbReference type="ChEBI" id="CHEBI:43474"/>
        <dbReference type="ChEBI" id="CHEBI:58228"/>
        <dbReference type="EC" id="2.1.3.2"/>
    </reaction>
</comment>
<comment type="pathway">
    <text evidence="1">Pyrimidine metabolism; UMP biosynthesis via de novo pathway; (S)-dihydroorotate from bicarbonate: step 2/3.</text>
</comment>
<comment type="subunit">
    <text evidence="1">Heterododecamer (2C3:3R2) of six catalytic PyrB chains organized as two trimers (C3), and six regulatory PyrI chains organized as three dimers (R2).</text>
</comment>
<comment type="similarity">
    <text evidence="1">Belongs to the aspartate/ornithine carbamoyltransferase superfamily. ATCase family.</text>
</comment>
<organism>
    <name type="scientific">Neisseria gonorrhoeae (strain ATCC 700825 / FA 1090)</name>
    <dbReference type="NCBI Taxonomy" id="242231"/>
    <lineage>
        <taxon>Bacteria</taxon>
        <taxon>Pseudomonadati</taxon>
        <taxon>Pseudomonadota</taxon>
        <taxon>Betaproteobacteria</taxon>
        <taxon>Neisseriales</taxon>
        <taxon>Neisseriaceae</taxon>
        <taxon>Neisseria</taxon>
    </lineage>
</organism>
<gene>
    <name evidence="1" type="primary">pyrB</name>
    <name type="ordered locus">NGO_1877</name>
</gene>
<keyword id="KW-0665">Pyrimidine biosynthesis</keyword>
<keyword id="KW-1185">Reference proteome</keyword>
<keyword id="KW-0808">Transferase</keyword>
<proteinExistence type="inferred from homology"/>
<reference key="1">
    <citation type="submission" date="2003-03" db="EMBL/GenBank/DDBJ databases">
        <title>The complete genome sequence of Neisseria gonorrhoeae.</title>
        <authorList>
            <person name="Lewis L.A."/>
            <person name="Gillaspy A.F."/>
            <person name="McLaughlin R.E."/>
            <person name="Gipson M."/>
            <person name="Ducey T.F."/>
            <person name="Ownbey T."/>
            <person name="Hartman K."/>
            <person name="Nydick C."/>
            <person name="Carson M.B."/>
            <person name="Vaughn J."/>
            <person name="Thomson C."/>
            <person name="Song L."/>
            <person name="Lin S."/>
            <person name="Yuan X."/>
            <person name="Najar F."/>
            <person name="Zhan M."/>
            <person name="Ren Q."/>
            <person name="Zhu H."/>
            <person name="Qi S."/>
            <person name="Kenton S.M."/>
            <person name="Lai H."/>
            <person name="White J.D."/>
            <person name="Clifton S."/>
            <person name="Roe B.A."/>
            <person name="Dyer D.W."/>
        </authorList>
    </citation>
    <scope>NUCLEOTIDE SEQUENCE [LARGE SCALE GENOMIC DNA]</scope>
    <source>
        <strain>ATCC 700825 / FA 1090</strain>
    </source>
</reference>
<evidence type="ECO:0000255" key="1">
    <source>
        <dbReference type="HAMAP-Rule" id="MF_00001"/>
    </source>
</evidence>